<protein>
    <recommendedName>
        <fullName>Uncharacterized protein R07B1.9</fullName>
    </recommendedName>
</protein>
<keyword id="KW-1185">Reference proteome</keyword>
<dbReference type="EMBL" id="Z48621">
    <property type="protein sequence ID" value="CAA88546.1"/>
    <property type="molecule type" value="Genomic_DNA"/>
</dbReference>
<dbReference type="PIR" id="T23999">
    <property type="entry name" value="T23999"/>
</dbReference>
<dbReference type="RefSeq" id="NP_509657.1">
    <property type="nucleotide sequence ID" value="NM_077256.4"/>
</dbReference>
<dbReference type="FunCoup" id="Q09609">
    <property type="interactions" value="176"/>
</dbReference>
<dbReference type="STRING" id="6239.R07B1.9.1"/>
<dbReference type="iPTMnet" id="Q09609"/>
<dbReference type="PaxDb" id="6239-R07B1.9"/>
<dbReference type="PeptideAtlas" id="Q09609"/>
<dbReference type="EnsemblMetazoa" id="R07B1.9.1">
    <property type="protein sequence ID" value="R07B1.9.1"/>
    <property type="gene ID" value="WBGene00011081"/>
</dbReference>
<dbReference type="GeneID" id="181201"/>
<dbReference type="KEGG" id="cel:CELE_R07B1.9"/>
<dbReference type="UCSC" id="R07B1.9">
    <property type="organism name" value="c. elegans"/>
</dbReference>
<dbReference type="AGR" id="WB:WBGene00011081"/>
<dbReference type="CTD" id="181201"/>
<dbReference type="WormBase" id="R07B1.9">
    <property type="protein sequence ID" value="CE01635"/>
    <property type="gene ID" value="WBGene00011081"/>
</dbReference>
<dbReference type="eggNOG" id="ENOG502RD2X">
    <property type="taxonomic scope" value="Eukaryota"/>
</dbReference>
<dbReference type="HOGENOM" id="CLU_388430_0_0_1"/>
<dbReference type="InParanoid" id="Q09609"/>
<dbReference type="OMA" id="ELGKWRY"/>
<dbReference type="OrthoDB" id="5806414at2759"/>
<dbReference type="PRO" id="PR:Q09609"/>
<dbReference type="Proteomes" id="UP000001940">
    <property type="component" value="Chromosome X"/>
</dbReference>
<dbReference type="Bgee" id="WBGene00011081">
    <property type="expression patterns" value="Expressed in pharyngeal muscle cell (C elegans) and 3 other cell types or tissues"/>
</dbReference>
<feature type="chain" id="PRO_0000065423" description="Uncharacterized protein R07B1.9">
    <location>
        <begin position="1"/>
        <end position="770"/>
    </location>
</feature>
<feature type="region of interest" description="Disordered" evidence="1">
    <location>
        <begin position="736"/>
        <end position="770"/>
    </location>
</feature>
<feature type="compositionally biased region" description="Polar residues" evidence="1">
    <location>
        <begin position="754"/>
        <end position="770"/>
    </location>
</feature>
<reference key="1">
    <citation type="journal article" date="1998" name="Science">
        <title>Genome sequence of the nematode C. elegans: a platform for investigating biology.</title>
        <authorList>
            <consortium name="The C. elegans sequencing consortium"/>
        </authorList>
    </citation>
    <scope>NUCLEOTIDE SEQUENCE [LARGE SCALE GENOMIC DNA]</scope>
    <source>
        <strain>Bristol N2</strain>
    </source>
</reference>
<sequence>MSARSAYLCQIQICNGFLIAAGLLAVGLAGSQFSKVGLDNYRDIDFRLLNFIHVVTGCIGFYSLWRNHGSIVTKSLYLVSFVIGFATAVFYGFTTYRVVKAGENLNQLQSADGFNEEFQSENSNYAGRIVISALMIASGAVASLFSLFAIFLLSKIIVVTIPVYPLQSREQELAMSSAKKTLASIGLIKFILAFGILGLCVFIEYEHENVAGQDKYIKIGLDHISAMLCIVSGAMDIWATKGKNQQNLNLKVALAVAVVAATWCLKTVDNNAMPFYKNDLKFYYQGREVGDPSITSTDAPRYILVVAHGVLLGCFGIAFFLSTLSAVIVGTYLHLDFHSMHTEVNKSIKIQTGVLNVLHVFWGACMLALCILGLLDTWWRGEFLGADLLWVSVLFMTTGLMTSNNYSVMITTKFILSVVCLGISVEKMCASANLIYQMAAYPAYRNGNDRTFVAQIILYSIQAGIYLLEALTSLAGSYLYGTELRKQPNLTYRHSNGVHGLFSLGTLFYAVVITGTYIVFELGKWRYNEIPIEVPFFRLGNGPLAGAVFIVQFLCIPFPSLLASASILNIIIASISLFTVSSAITNVYYLQRYLQASDLLPTTETQQTIYQVAIILAAGAALACVICTVCAIICSLRSSYILHHRSTSPDSTVVAPLGEEQFGSGTLRVGTHMRTPSRPFHPQQSPAGGGVQPMEEQSVYWSADENPFYYHTSKRFYGKPYQIESGFYGYALAGSGSGQPGQSPANVGDDPNRMVQSSASQTQIGHVFNN</sequence>
<name>YRN9_CAEEL</name>
<gene>
    <name type="ORF">R07B1.9</name>
</gene>
<accession>Q09609</accession>
<organism>
    <name type="scientific">Caenorhabditis elegans</name>
    <dbReference type="NCBI Taxonomy" id="6239"/>
    <lineage>
        <taxon>Eukaryota</taxon>
        <taxon>Metazoa</taxon>
        <taxon>Ecdysozoa</taxon>
        <taxon>Nematoda</taxon>
        <taxon>Chromadorea</taxon>
        <taxon>Rhabditida</taxon>
        <taxon>Rhabditina</taxon>
        <taxon>Rhabditomorpha</taxon>
        <taxon>Rhabditoidea</taxon>
        <taxon>Rhabditidae</taxon>
        <taxon>Peloderinae</taxon>
        <taxon>Caenorhabditis</taxon>
    </lineage>
</organism>
<proteinExistence type="predicted"/>
<evidence type="ECO:0000256" key="1">
    <source>
        <dbReference type="SAM" id="MobiDB-lite"/>
    </source>
</evidence>